<sequence length="489" mass="54450">MDKLREYLNLLKERFNALTPVQKALAVGIPLLLLSLGAVALIYLSQENYTVLYTGLSPDDLNAVVTELDKEGVKYKISPDGRTIYVPENVARELRLKLAAKGVPRKGIVGYELFDKSGIVLSRFQQLVNFKRAIEGELAKTIMSLDCVEFARVHIVLPEKSLFIREEEEAKASVFLKLKPGCELTPEQVKAIRNLVSGSVENLKPSQVVVVDDKGRDLTAYLDEEFKTNASQLKVKREFEKSLERKLQKTLEEVFGYGKVKVNVSAELDFSSMKKREELYDPDLTAVVSEQKKKERTTSTRAQGIPGTQANIPPATGRQGGGELITERKESITNYEVSKREIYFEDKTIKVKRISVGLVIDKDVKVNTEELKNLIIASAGLDPKRGDQVSIVSVPFVKPTVVAEKPKVPTYVYVAVALVSLVILGLVAFGLVKLLRRRPPAPTPAPAVPGVPPTVEEVRKKTPYEELLEIAKQEPEKVAMVLKKWLKEG</sequence>
<organism>
    <name type="scientific">Aquifex aeolicus (strain VF5)</name>
    <dbReference type="NCBI Taxonomy" id="224324"/>
    <lineage>
        <taxon>Bacteria</taxon>
        <taxon>Pseudomonadati</taxon>
        <taxon>Aquificota</taxon>
        <taxon>Aquificia</taxon>
        <taxon>Aquificales</taxon>
        <taxon>Aquificaceae</taxon>
        <taxon>Aquifex</taxon>
    </lineage>
</organism>
<reference key="1">
    <citation type="journal article" date="1998" name="Nature">
        <title>The complete genome of the hyperthermophilic bacterium Aquifex aeolicus.</title>
        <authorList>
            <person name="Deckert G."/>
            <person name="Warren P.V."/>
            <person name="Gaasterland T."/>
            <person name="Young W.G."/>
            <person name="Lenox A.L."/>
            <person name="Graham D.E."/>
            <person name="Overbeek R."/>
            <person name="Snead M.A."/>
            <person name="Keller M."/>
            <person name="Aujay M."/>
            <person name="Huber R."/>
            <person name="Feldman R.A."/>
            <person name="Short J.M."/>
            <person name="Olsen G.J."/>
            <person name="Swanson R.V."/>
        </authorList>
    </citation>
    <scope>NUCLEOTIDE SEQUENCE [LARGE SCALE GENOMIC DNA]</scope>
    <source>
        <strain>VF5</strain>
    </source>
</reference>
<name>FLIF_AQUAE</name>
<comment type="function">
    <text evidence="1">The M ring may be actively involved in energy transduction.</text>
</comment>
<comment type="subunit">
    <text evidence="1">The basal body constitutes a major portion of the flagellar organelle and consists of five rings (E,L,P,S, and M) mounted on a central rod. The M ring is integral to the inner membrane of the cell and may be connected to the flagellar rod via the S ring. The S (supramembrane ring) lies just distal to the M ring. The L and P rings lie in the outer membrane and the periplasmic space, respectively (By similarity).</text>
</comment>
<comment type="subcellular location">
    <subcellularLocation>
        <location evidence="1">Cell inner membrane</location>
        <topology evidence="1">Multi-pass membrane protein</topology>
    </subcellularLocation>
    <subcellularLocation>
        <location evidence="1">Bacterial flagellum basal body</location>
    </subcellularLocation>
</comment>
<comment type="similarity">
    <text evidence="4">Belongs to the FliF family.</text>
</comment>
<proteinExistence type="evidence at protein level"/>
<feature type="chain" id="PRO_0000180872" description="Flagellar M-ring protein">
    <location>
        <begin position="1"/>
        <end position="489"/>
    </location>
</feature>
<feature type="transmembrane region" description="Helical" evidence="2">
    <location>
        <begin position="24"/>
        <end position="44"/>
    </location>
</feature>
<feature type="transmembrane region" description="Helical" evidence="2">
    <location>
        <begin position="412"/>
        <end position="432"/>
    </location>
</feature>
<feature type="region of interest" description="Disordered" evidence="3">
    <location>
        <begin position="290"/>
        <end position="322"/>
    </location>
</feature>
<feature type="compositionally biased region" description="Polar residues" evidence="3">
    <location>
        <begin position="299"/>
        <end position="311"/>
    </location>
</feature>
<feature type="helix" evidence="5">
    <location>
        <begin position="62"/>
        <end position="68"/>
    </location>
</feature>
<feature type="turn" evidence="5">
    <location>
        <begin position="69"/>
        <end position="72"/>
    </location>
</feature>
<feature type="strand" evidence="5">
    <location>
        <begin position="79"/>
        <end position="82"/>
    </location>
</feature>
<feature type="strand" evidence="5">
    <location>
        <begin position="84"/>
        <end position="87"/>
    </location>
</feature>
<feature type="helix" evidence="5">
    <location>
        <begin position="88"/>
        <end position="101"/>
    </location>
</feature>
<feature type="strand" evidence="5">
    <location>
        <begin position="108"/>
        <end position="114"/>
    </location>
</feature>
<feature type="strand" evidence="5">
    <location>
        <begin position="116"/>
        <end position="121"/>
    </location>
</feature>
<feature type="helix" evidence="5">
    <location>
        <begin position="123"/>
        <end position="142"/>
    </location>
</feature>
<feature type="strand" evidence="5">
    <location>
        <begin position="145"/>
        <end position="156"/>
    </location>
</feature>
<feature type="strand" evidence="5">
    <location>
        <begin position="160"/>
        <end position="162"/>
    </location>
</feature>
<feature type="strand" evidence="5">
    <location>
        <begin position="171"/>
        <end position="178"/>
    </location>
</feature>
<feature type="helix" evidence="5">
    <location>
        <begin position="186"/>
        <end position="197"/>
    </location>
</feature>
<feature type="helix" evidence="5">
    <location>
        <begin position="205"/>
        <end position="207"/>
    </location>
</feature>
<feature type="strand" evidence="5">
    <location>
        <begin position="208"/>
        <end position="212"/>
    </location>
</feature>
<keyword id="KW-0002">3D-structure</keyword>
<keyword id="KW-0975">Bacterial flagellum</keyword>
<keyword id="KW-0997">Cell inner membrane</keyword>
<keyword id="KW-1003">Cell membrane</keyword>
<keyword id="KW-0472">Membrane</keyword>
<keyword id="KW-1185">Reference proteome</keyword>
<keyword id="KW-0812">Transmembrane</keyword>
<keyword id="KW-1133">Transmembrane helix</keyword>
<accession>O67241</accession>
<evidence type="ECO:0000250" key="1"/>
<evidence type="ECO:0000255" key="2"/>
<evidence type="ECO:0000256" key="3">
    <source>
        <dbReference type="SAM" id="MobiDB-lite"/>
    </source>
</evidence>
<evidence type="ECO:0000305" key="4"/>
<evidence type="ECO:0007829" key="5">
    <source>
        <dbReference type="PDB" id="7CIK"/>
    </source>
</evidence>
<dbReference type="EMBL" id="AE000657">
    <property type="protein sequence ID" value="AAC07196.1"/>
    <property type="molecule type" value="Genomic_DNA"/>
</dbReference>
<dbReference type="PIR" id="F70401">
    <property type="entry name" value="F70401"/>
</dbReference>
<dbReference type="RefSeq" id="NP_213805.1">
    <property type="nucleotide sequence ID" value="NC_000918.1"/>
</dbReference>
<dbReference type="RefSeq" id="WP_010880743.1">
    <property type="nucleotide sequence ID" value="NC_000918.1"/>
</dbReference>
<dbReference type="PDB" id="7CIK">
    <property type="method" value="X-ray"/>
    <property type="resolution" value="2.29 A"/>
    <property type="chains" value="A/B=58-213"/>
</dbReference>
<dbReference type="PDBsum" id="7CIK"/>
<dbReference type="SMR" id="O67241"/>
<dbReference type="FunCoup" id="O67241">
    <property type="interactions" value="87"/>
</dbReference>
<dbReference type="STRING" id="224324.aq_1182"/>
<dbReference type="EnsemblBacteria" id="AAC07196">
    <property type="protein sequence ID" value="AAC07196"/>
    <property type="gene ID" value="aq_1182"/>
</dbReference>
<dbReference type="KEGG" id="aae:aq_1182"/>
<dbReference type="PATRIC" id="fig|224324.8.peg.918"/>
<dbReference type="eggNOG" id="COG1766">
    <property type="taxonomic scope" value="Bacteria"/>
</dbReference>
<dbReference type="HOGENOM" id="CLU_028108_2_0_0"/>
<dbReference type="InParanoid" id="O67241"/>
<dbReference type="OrthoDB" id="9807026at2"/>
<dbReference type="Proteomes" id="UP000000798">
    <property type="component" value="Chromosome"/>
</dbReference>
<dbReference type="GO" id="GO:0009431">
    <property type="term" value="C:bacterial-type flagellum basal body, MS ring"/>
    <property type="evidence" value="ECO:0007669"/>
    <property type="project" value="InterPro"/>
</dbReference>
<dbReference type="GO" id="GO:0005886">
    <property type="term" value="C:plasma membrane"/>
    <property type="evidence" value="ECO:0007669"/>
    <property type="project" value="UniProtKB-SubCell"/>
</dbReference>
<dbReference type="GO" id="GO:0003774">
    <property type="term" value="F:cytoskeletal motor activity"/>
    <property type="evidence" value="ECO:0007669"/>
    <property type="project" value="InterPro"/>
</dbReference>
<dbReference type="GO" id="GO:0071973">
    <property type="term" value="P:bacterial-type flagellum-dependent cell motility"/>
    <property type="evidence" value="ECO:0007669"/>
    <property type="project" value="InterPro"/>
</dbReference>
<dbReference type="Gene3D" id="3.30.300.30">
    <property type="match status" value="1"/>
</dbReference>
<dbReference type="InterPro" id="IPR045851">
    <property type="entry name" value="AMP-bd_C_sf"/>
</dbReference>
<dbReference type="InterPro" id="IPR013556">
    <property type="entry name" value="Flag_M-ring_C"/>
</dbReference>
<dbReference type="InterPro" id="IPR000067">
    <property type="entry name" value="FlgMring_FliF"/>
</dbReference>
<dbReference type="InterPro" id="IPR006182">
    <property type="entry name" value="FliF_N_dom"/>
</dbReference>
<dbReference type="InterPro" id="IPR043427">
    <property type="entry name" value="YscJ/FliF"/>
</dbReference>
<dbReference type="NCBIfam" id="TIGR00206">
    <property type="entry name" value="fliF"/>
    <property type="match status" value="1"/>
</dbReference>
<dbReference type="PANTHER" id="PTHR30046">
    <property type="entry name" value="FLAGELLAR M-RING PROTEIN"/>
    <property type="match status" value="1"/>
</dbReference>
<dbReference type="PANTHER" id="PTHR30046:SF0">
    <property type="entry name" value="FLAGELLAR M-RING PROTEIN"/>
    <property type="match status" value="1"/>
</dbReference>
<dbReference type="Pfam" id="PF01514">
    <property type="entry name" value="YscJ_FliF"/>
    <property type="match status" value="1"/>
</dbReference>
<dbReference type="Pfam" id="PF08345">
    <property type="entry name" value="YscJ_FliF_C"/>
    <property type="match status" value="1"/>
</dbReference>
<dbReference type="PIRSF" id="PIRSF004862">
    <property type="entry name" value="FliF"/>
    <property type="match status" value="1"/>
</dbReference>
<dbReference type="PRINTS" id="PR01009">
    <property type="entry name" value="FLGMRINGFLIF"/>
</dbReference>
<gene>
    <name type="primary">fliF</name>
    <name type="ordered locus">aq_1182</name>
</gene>
<protein>
    <recommendedName>
        <fullName>Flagellar M-ring protein</fullName>
    </recommendedName>
</protein>